<accession>Q9JTA6</accession>
<accession>A1ITA9</accession>
<reference key="1">
    <citation type="journal article" date="2000" name="Nature">
        <title>Complete DNA sequence of a serogroup A strain of Neisseria meningitidis Z2491.</title>
        <authorList>
            <person name="Parkhill J."/>
            <person name="Achtman M."/>
            <person name="James K.D."/>
            <person name="Bentley S.D."/>
            <person name="Churcher C.M."/>
            <person name="Klee S.R."/>
            <person name="Morelli G."/>
            <person name="Basham D."/>
            <person name="Brown D."/>
            <person name="Chillingworth T."/>
            <person name="Davies R.M."/>
            <person name="Davis P."/>
            <person name="Devlin K."/>
            <person name="Feltwell T."/>
            <person name="Hamlin N."/>
            <person name="Holroyd S."/>
            <person name="Jagels K."/>
            <person name="Leather S."/>
            <person name="Moule S."/>
            <person name="Mungall K.L."/>
            <person name="Quail M.A."/>
            <person name="Rajandream M.A."/>
            <person name="Rutherford K.M."/>
            <person name="Simmonds M."/>
            <person name="Skelton J."/>
            <person name="Whitehead S."/>
            <person name="Spratt B.G."/>
            <person name="Barrell B.G."/>
        </authorList>
    </citation>
    <scope>NUCLEOTIDE SEQUENCE [LARGE SCALE GENOMIC DNA]</scope>
    <source>
        <strain>DSM 15465 / Z2491</strain>
    </source>
</reference>
<protein>
    <recommendedName>
        <fullName evidence="1">Alanine racemase</fullName>
        <ecNumber evidence="1">5.1.1.1</ecNumber>
    </recommendedName>
</protein>
<organism>
    <name type="scientific">Neisseria meningitidis serogroup A / serotype 4A (strain DSM 15465 / Z2491)</name>
    <dbReference type="NCBI Taxonomy" id="122587"/>
    <lineage>
        <taxon>Bacteria</taxon>
        <taxon>Pseudomonadati</taxon>
        <taxon>Pseudomonadota</taxon>
        <taxon>Betaproteobacteria</taxon>
        <taxon>Neisseriales</taxon>
        <taxon>Neisseriaceae</taxon>
        <taxon>Neisseria</taxon>
    </lineage>
</organism>
<evidence type="ECO:0000255" key="1">
    <source>
        <dbReference type="HAMAP-Rule" id="MF_01201"/>
    </source>
</evidence>
<sequence length="352" mass="38848">MRPLNVQIRLGNLRHNYRILKEMHGGKLLAVVKADAYGHGAVRCAFALADLADGFAVATIDEGIRLRESGITHPIVLLEGVFEASEYEAVEQYSLWPAVGNQWQLEALLSRHWKKPVKVWLKMDSGMHRTGFFPHDYASVYAALKQSEYVDSIVKFSHFSCADEPESGMTEIQMEAFDLGTEGLEGEESLANSAAILNVPEARRDWGRAGLALYGISPFGGSDDRLKPVMRLSTRIFGERVLQPHSPIGYGATFYTSKSTRVGLIACGYADGYPRRAPSNSPVAVDGKLTRVIGRVSMDMMTIELDASQEGLGHEVELWGDTVNINTVAEAAGTIPYELMCNIKRAKFTYIE</sequence>
<feature type="chain" id="PRO_0000114540" description="Alanine racemase">
    <location>
        <begin position="1"/>
        <end position="352"/>
    </location>
</feature>
<feature type="active site" description="Proton acceptor; specific for D-alanine" evidence="1">
    <location>
        <position position="33"/>
    </location>
</feature>
<feature type="active site" description="Proton acceptor; specific for L-alanine" evidence="1">
    <location>
        <position position="250"/>
    </location>
</feature>
<feature type="binding site" evidence="1">
    <location>
        <position position="129"/>
    </location>
    <ligand>
        <name>substrate</name>
    </ligand>
</feature>
<feature type="binding site" evidence="1">
    <location>
        <position position="298"/>
    </location>
    <ligand>
        <name>substrate</name>
    </ligand>
</feature>
<feature type="modified residue" description="N6-(pyridoxal phosphate)lysine" evidence="1">
    <location>
        <position position="33"/>
    </location>
</feature>
<comment type="function">
    <text evidence="1">Catalyzes the interconversion of L-alanine and D-alanine. May also act on other amino acids.</text>
</comment>
<comment type="catalytic activity">
    <reaction evidence="1">
        <text>L-alanine = D-alanine</text>
        <dbReference type="Rhea" id="RHEA:20249"/>
        <dbReference type="ChEBI" id="CHEBI:57416"/>
        <dbReference type="ChEBI" id="CHEBI:57972"/>
        <dbReference type="EC" id="5.1.1.1"/>
    </reaction>
</comment>
<comment type="cofactor">
    <cofactor evidence="1">
        <name>pyridoxal 5'-phosphate</name>
        <dbReference type="ChEBI" id="CHEBI:597326"/>
    </cofactor>
</comment>
<comment type="pathway">
    <text evidence="1">Amino-acid biosynthesis; D-alanine biosynthesis; D-alanine from L-alanine: step 1/1.</text>
</comment>
<comment type="similarity">
    <text evidence="1">Belongs to the alanine racemase family.</text>
</comment>
<dbReference type="EC" id="5.1.1.1" evidence="1"/>
<dbReference type="EMBL" id="AL157959">
    <property type="protein sequence ID" value="CAM09022.1"/>
    <property type="molecule type" value="Genomic_DNA"/>
</dbReference>
<dbReference type="PIR" id="B81818">
    <property type="entry name" value="B81818"/>
</dbReference>
<dbReference type="RefSeq" id="WP_002237263.1">
    <property type="nucleotide sequence ID" value="NC_003116.1"/>
</dbReference>
<dbReference type="SMR" id="Q9JTA6"/>
<dbReference type="EnsemblBacteria" id="CAM09022">
    <property type="protein sequence ID" value="CAM09022"/>
    <property type="gene ID" value="NMA1906"/>
</dbReference>
<dbReference type="GeneID" id="93387681"/>
<dbReference type="KEGG" id="nma:NMA1906"/>
<dbReference type="HOGENOM" id="CLU_028393_1_0_4"/>
<dbReference type="UniPathway" id="UPA00042">
    <property type="reaction ID" value="UER00497"/>
</dbReference>
<dbReference type="Proteomes" id="UP000000626">
    <property type="component" value="Chromosome"/>
</dbReference>
<dbReference type="GO" id="GO:0005829">
    <property type="term" value="C:cytosol"/>
    <property type="evidence" value="ECO:0007669"/>
    <property type="project" value="TreeGrafter"/>
</dbReference>
<dbReference type="GO" id="GO:0008784">
    <property type="term" value="F:alanine racemase activity"/>
    <property type="evidence" value="ECO:0007669"/>
    <property type="project" value="UniProtKB-UniRule"/>
</dbReference>
<dbReference type="GO" id="GO:0030170">
    <property type="term" value="F:pyridoxal phosphate binding"/>
    <property type="evidence" value="ECO:0007669"/>
    <property type="project" value="UniProtKB-UniRule"/>
</dbReference>
<dbReference type="GO" id="GO:0030632">
    <property type="term" value="P:D-alanine biosynthetic process"/>
    <property type="evidence" value="ECO:0007669"/>
    <property type="project" value="UniProtKB-UniRule"/>
</dbReference>
<dbReference type="CDD" id="cd06827">
    <property type="entry name" value="PLPDE_III_AR_proteobact"/>
    <property type="match status" value="1"/>
</dbReference>
<dbReference type="FunFam" id="3.20.20.10:FF:000002">
    <property type="entry name" value="Alanine racemase"/>
    <property type="match status" value="1"/>
</dbReference>
<dbReference type="Gene3D" id="3.20.20.10">
    <property type="entry name" value="Alanine racemase"/>
    <property type="match status" value="1"/>
</dbReference>
<dbReference type="Gene3D" id="2.40.37.10">
    <property type="entry name" value="Lyase, Ornithine Decarboxylase, Chain A, domain 1"/>
    <property type="match status" value="1"/>
</dbReference>
<dbReference type="HAMAP" id="MF_01201">
    <property type="entry name" value="Ala_racemase"/>
    <property type="match status" value="1"/>
</dbReference>
<dbReference type="InterPro" id="IPR000821">
    <property type="entry name" value="Ala_racemase"/>
</dbReference>
<dbReference type="InterPro" id="IPR009006">
    <property type="entry name" value="Ala_racemase/Decarboxylase_C"/>
</dbReference>
<dbReference type="InterPro" id="IPR011079">
    <property type="entry name" value="Ala_racemase_C"/>
</dbReference>
<dbReference type="InterPro" id="IPR001608">
    <property type="entry name" value="Ala_racemase_N"/>
</dbReference>
<dbReference type="InterPro" id="IPR020622">
    <property type="entry name" value="Ala_racemase_pyridoxalP-BS"/>
</dbReference>
<dbReference type="InterPro" id="IPR029066">
    <property type="entry name" value="PLP-binding_barrel"/>
</dbReference>
<dbReference type="NCBIfam" id="TIGR00492">
    <property type="entry name" value="alr"/>
    <property type="match status" value="1"/>
</dbReference>
<dbReference type="PANTHER" id="PTHR30511">
    <property type="entry name" value="ALANINE RACEMASE"/>
    <property type="match status" value="1"/>
</dbReference>
<dbReference type="PANTHER" id="PTHR30511:SF0">
    <property type="entry name" value="ALANINE RACEMASE, CATABOLIC-RELATED"/>
    <property type="match status" value="1"/>
</dbReference>
<dbReference type="Pfam" id="PF00842">
    <property type="entry name" value="Ala_racemase_C"/>
    <property type="match status" value="1"/>
</dbReference>
<dbReference type="Pfam" id="PF01168">
    <property type="entry name" value="Ala_racemase_N"/>
    <property type="match status" value="1"/>
</dbReference>
<dbReference type="PRINTS" id="PR00992">
    <property type="entry name" value="ALARACEMASE"/>
</dbReference>
<dbReference type="SMART" id="SM01005">
    <property type="entry name" value="Ala_racemase_C"/>
    <property type="match status" value="1"/>
</dbReference>
<dbReference type="SUPFAM" id="SSF50621">
    <property type="entry name" value="Alanine racemase C-terminal domain-like"/>
    <property type="match status" value="1"/>
</dbReference>
<dbReference type="SUPFAM" id="SSF51419">
    <property type="entry name" value="PLP-binding barrel"/>
    <property type="match status" value="1"/>
</dbReference>
<dbReference type="PROSITE" id="PS00395">
    <property type="entry name" value="ALANINE_RACEMASE"/>
    <property type="match status" value="1"/>
</dbReference>
<name>ALR_NEIMA</name>
<keyword id="KW-0413">Isomerase</keyword>
<keyword id="KW-0663">Pyridoxal phosphate</keyword>
<gene>
    <name type="primary">alr</name>
    <name type="ordered locus">NMA1906</name>
</gene>
<proteinExistence type="inferred from homology"/>